<name>RS18_CLOBL</name>
<keyword id="KW-0687">Ribonucleoprotein</keyword>
<keyword id="KW-0689">Ribosomal protein</keyword>
<keyword id="KW-0694">RNA-binding</keyword>
<keyword id="KW-0699">rRNA-binding</keyword>
<protein>
    <recommendedName>
        <fullName evidence="1">Small ribosomal subunit protein bS18</fullName>
    </recommendedName>
    <alternativeName>
        <fullName evidence="2">30S ribosomal protein S18</fullName>
    </alternativeName>
</protein>
<evidence type="ECO:0000255" key="1">
    <source>
        <dbReference type="HAMAP-Rule" id="MF_00270"/>
    </source>
</evidence>
<evidence type="ECO:0000305" key="2"/>
<reference key="1">
    <citation type="submission" date="2007-06" db="EMBL/GenBank/DDBJ databases">
        <authorList>
            <person name="Brinkac L.M."/>
            <person name="Daugherty S."/>
            <person name="Dodson R.J."/>
            <person name="Madupu R."/>
            <person name="Brown J.L."/>
            <person name="Bruce D."/>
            <person name="Detter C."/>
            <person name="Munk C."/>
            <person name="Smith L.A."/>
            <person name="Smith T.J."/>
            <person name="White O."/>
            <person name="Brettin T.S."/>
        </authorList>
    </citation>
    <scope>NUCLEOTIDE SEQUENCE [LARGE SCALE GENOMIC DNA]</scope>
    <source>
        <strain>Langeland / NCTC 10281 / Type F</strain>
    </source>
</reference>
<feature type="chain" id="PRO_1000003484" description="Small ribosomal subunit protein bS18">
    <location>
        <begin position="1"/>
        <end position="80"/>
    </location>
</feature>
<organism>
    <name type="scientific">Clostridium botulinum (strain Langeland / NCTC 10281 / Type F)</name>
    <dbReference type="NCBI Taxonomy" id="441772"/>
    <lineage>
        <taxon>Bacteria</taxon>
        <taxon>Bacillati</taxon>
        <taxon>Bacillota</taxon>
        <taxon>Clostridia</taxon>
        <taxon>Eubacteriales</taxon>
        <taxon>Clostridiaceae</taxon>
        <taxon>Clostridium</taxon>
    </lineage>
</organism>
<comment type="function">
    <text evidence="1">Binds as a heterodimer with protein bS6 to the central domain of the 16S rRNA, where it helps stabilize the platform of the 30S subunit.</text>
</comment>
<comment type="subunit">
    <text evidence="1">Part of the 30S ribosomal subunit. Forms a tight heterodimer with protein bS6.</text>
</comment>
<comment type="similarity">
    <text evidence="1">Belongs to the bacterial ribosomal protein bS18 family.</text>
</comment>
<sequence length="80" mass="9345">MAGREGGRRQRRTKRKVCTFCAEKSEAIDYKDINKLRKFVTERGKILPRRISGNCAKHQRELTRAIKRARNIALLPFTTE</sequence>
<dbReference type="EMBL" id="CP000728">
    <property type="protein sequence ID" value="ABS40799.1"/>
    <property type="molecule type" value="Genomic_DNA"/>
</dbReference>
<dbReference type="RefSeq" id="WP_003359407.1">
    <property type="nucleotide sequence ID" value="NC_009699.1"/>
</dbReference>
<dbReference type="SMR" id="A7GJM2"/>
<dbReference type="GeneID" id="5188014"/>
<dbReference type="KEGG" id="cbf:CLI_3871"/>
<dbReference type="HOGENOM" id="CLU_148710_2_2_9"/>
<dbReference type="Proteomes" id="UP000002410">
    <property type="component" value="Chromosome"/>
</dbReference>
<dbReference type="GO" id="GO:0022627">
    <property type="term" value="C:cytosolic small ribosomal subunit"/>
    <property type="evidence" value="ECO:0007669"/>
    <property type="project" value="TreeGrafter"/>
</dbReference>
<dbReference type="GO" id="GO:0070181">
    <property type="term" value="F:small ribosomal subunit rRNA binding"/>
    <property type="evidence" value="ECO:0007669"/>
    <property type="project" value="TreeGrafter"/>
</dbReference>
<dbReference type="GO" id="GO:0003735">
    <property type="term" value="F:structural constituent of ribosome"/>
    <property type="evidence" value="ECO:0007669"/>
    <property type="project" value="InterPro"/>
</dbReference>
<dbReference type="GO" id="GO:0006412">
    <property type="term" value="P:translation"/>
    <property type="evidence" value="ECO:0007669"/>
    <property type="project" value="UniProtKB-UniRule"/>
</dbReference>
<dbReference type="FunFam" id="4.10.640.10:FF:000004">
    <property type="entry name" value="30S ribosomal protein S18"/>
    <property type="match status" value="1"/>
</dbReference>
<dbReference type="Gene3D" id="4.10.640.10">
    <property type="entry name" value="Ribosomal protein S18"/>
    <property type="match status" value="1"/>
</dbReference>
<dbReference type="HAMAP" id="MF_00270">
    <property type="entry name" value="Ribosomal_bS18"/>
    <property type="match status" value="1"/>
</dbReference>
<dbReference type="InterPro" id="IPR001648">
    <property type="entry name" value="Ribosomal_bS18"/>
</dbReference>
<dbReference type="InterPro" id="IPR018275">
    <property type="entry name" value="Ribosomal_bS18_CS"/>
</dbReference>
<dbReference type="InterPro" id="IPR036870">
    <property type="entry name" value="Ribosomal_bS18_sf"/>
</dbReference>
<dbReference type="NCBIfam" id="TIGR00165">
    <property type="entry name" value="S18"/>
    <property type="match status" value="1"/>
</dbReference>
<dbReference type="PANTHER" id="PTHR13479">
    <property type="entry name" value="30S RIBOSOMAL PROTEIN S18"/>
    <property type="match status" value="1"/>
</dbReference>
<dbReference type="PANTHER" id="PTHR13479:SF40">
    <property type="entry name" value="SMALL RIBOSOMAL SUBUNIT PROTEIN BS18M"/>
    <property type="match status" value="1"/>
</dbReference>
<dbReference type="Pfam" id="PF01084">
    <property type="entry name" value="Ribosomal_S18"/>
    <property type="match status" value="1"/>
</dbReference>
<dbReference type="PRINTS" id="PR00974">
    <property type="entry name" value="RIBOSOMALS18"/>
</dbReference>
<dbReference type="SUPFAM" id="SSF46911">
    <property type="entry name" value="Ribosomal protein S18"/>
    <property type="match status" value="1"/>
</dbReference>
<dbReference type="PROSITE" id="PS00057">
    <property type="entry name" value="RIBOSOMAL_S18"/>
    <property type="match status" value="1"/>
</dbReference>
<gene>
    <name evidence="1" type="primary">rpsR</name>
    <name type="ordered locus">CLI_3871</name>
</gene>
<proteinExistence type="inferred from homology"/>
<accession>A7GJM2</accession>